<name>LEUC_BORBR</name>
<protein>
    <recommendedName>
        <fullName evidence="1">3-isopropylmalate dehydratase large subunit</fullName>
        <ecNumber evidence="1">4.2.1.33</ecNumber>
    </recommendedName>
    <alternativeName>
        <fullName evidence="1">Alpha-IPM isomerase</fullName>
        <shortName evidence="1">IPMI</shortName>
    </alternativeName>
    <alternativeName>
        <fullName evidence="1">Isopropylmalate isomerase</fullName>
    </alternativeName>
</protein>
<sequence>MAQTLYDKLWDAHVVHQESDGTCLLYIDRHLLHEVTSPQAFEGLALAGRQPWRVGANLAVADHNVPTLNRAQGIEDPISRLQVDTLDDNCAKYGITEFRMNDLRQGIVHVIGPEQGATLPGMTVVCGDSHTSTHGALGALAFGIGTSEVEHVLATQTLLMKKAKSMQINVEGELPFGCTAKDVVLHIIGIIGTAGGTGHAIEFSGSTIRGLSVEGRMTVCNMAIEAGARSGMVAVDDKTIDYFRGRPFAPVGVLWDQAVGYWRTLHSDAGARFDRVINVDARDIKPQVTWGTSPEMVLPVDGRVPDPDREKDDVRRSGMERALEYMGLKPNTPLVDIRVDRVFIGSCTNSRIEDLRAAAVVARGKRVAANVRQAMVVPGSGLVKQQAEREGLDKIFIEAGFEWREPGCSMCLAMNADRLEPGERCASTSNRNFEGRQGQGGRTHLVSPAMAAAAAVAGHFVDVRSFR</sequence>
<comment type="function">
    <text evidence="1">Catalyzes the isomerization between 2-isopropylmalate and 3-isopropylmalate, via the formation of 2-isopropylmaleate.</text>
</comment>
<comment type="catalytic activity">
    <reaction evidence="1">
        <text>(2R,3S)-3-isopropylmalate = (2S)-2-isopropylmalate</text>
        <dbReference type="Rhea" id="RHEA:32287"/>
        <dbReference type="ChEBI" id="CHEBI:1178"/>
        <dbReference type="ChEBI" id="CHEBI:35121"/>
        <dbReference type="EC" id="4.2.1.33"/>
    </reaction>
</comment>
<comment type="cofactor">
    <cofactor evidence="1">
        <name>[4Fe-4S] cluster</name>
        <dbReference type="ChEBI" id="CHEBI:49883"/>
    </cofactor>
    <text evidence="1">Binds 1 [4Fe-4S] cluster per subunit.</text>
</comment>
<comment type="pathway">
    <text evidence="1">Amino-acid biosynthesis; L-leucine biosynthesis; L-leucine from 3-methyl-2-oxobutanoate: step 2/4.</text>
</comment>
<comment type="subunit">
    <text evidence="1">Heterodimer of LeuC and LeuD.</text>
</comment>
<comment type="similarity">
    <text evidence="1">Belongs to the aconitase/IPM isomerase family. LeuC type 1 subfamily.</text>
</comment>
<comment type="sequence caution" evidence="2">
    <conflict type="erroneous initiation">
        <sequence resource="EMBL-CDS" id="CAE32626"/>
    </conflict>
</comment>
<reference key="1">
    <citation type="journal article" date="2003" name="Nat. Genet.">
        <title>Comparative analysis of the genome sequences of Bordetella pertussis, Bordetella parapertussis and Bordetella bronchiseptica.</title>
        <authorList>
            <person name="Parkhill J."/>
            <person name="Sebaihia M."/>
            <person name="Preston A."/>
            <person name="Murphy L.D."/>
            <person name="Thomson N.R."/>
            <person name="Harris D.E."/>
            <person name="Holden M.T.G."/>
            <person name="Churcher C.M."/>
            <person name="Bentley S.D."/>
            <person name="Mungall K.L."/>
            <person name="Cerdeno-Tarraga A.-M."/>
            <person name="Temple L."/>
            <person name="James K.D."/>
            <person name="Harris B."/>
            <person name="Quail M.A."/>
            <person name="Achtman M."/>
            <person name="Atkin R."/>
            <person name="Baker S."/>
            <person name="Basham D."/>
            <person name="Bason N."/>
            <person name="Cherevach I."/>
            <person name="Chillingworth T."/>
            <person name="Collins M."/>
            <person name="Cronin A."/>
            <person name="Davis P."/>
            <person name="Doggett J."/>
            <person name="Feltwell T."/>
            <person name="Goble A."/>
            <person name="Hamlin N."/>
            <person name="Hauser H."/>
            <person name="Holroyd S."/>
            <person name="Jagels K."/>
            <person name="Leather S."/>
            <person name="Moule S."/>
            <person name="Norberczak H."/>
            <person name="O'Neil S."/>
            <person name="Ormond D."/>
            <person name="Price C."/>
            <person name="Rabbinowitsch E."/>
            <person name="Rutter S."/>
            <person name="Sanders M."/>
            <person name="Saunders D."/>
            <person name="Seeger K."/>
            <person name="Sharp S."/>
            <person name="Simmonds M."/>
            <person name="Skelton J."/>
            <person name="Squares R."/>
            <person name="Squares S."/>
            <person name="Stevens K."/>
            <person name="Unwin L."/>
            <person name="Whitehead S."/>
            <person name="Barrell B.G."/>
            <person name="Maskell D.J."/>
        </authorList>
    </citation>
    <scope>NUCLEOTIDE SEQUENCE [LARGE SCALE GENOMIC DNA]</scope>
    <source>
        <strain>ATCC BAA-588 / NCTC 13252 / RB50</strain>
    </source>
</reference>
<proteinExistence type="inferred from homology"/>
<organism>
    <name type="scientific">Bordetella bronchiseptica (strain ATCC BAA-588 / NCTC 13252 / RB50)</name>
    <name type="common">Alcaligenes bronchisepticus</name>
    <dbReference type="NCBI Taxonomy" id="257310"/>
    <lineage>
        <taxon>Bacteria</taxon>
        <taxon>Pseudomonadati</taxon>
        <taxon>Pseudomonadota</taxon>
        <taxon>Betaproteobacteria</taxon>
        <taxon>Burkholderiales</taxon>
        <taxon>Alcaligenaceae</taxon>
        <taxon>Bordetella</taxon>
    </lineage>
</organism>
<gene>
    <name evidence="1" type="primary">leuC</name>
    <name type="ordered locus">BB2130</name>
</gene>
<evidence type="ECO:0000255" key="1">
    <source>
        <dbReference type="HAMAP-Rule" id="MF_01026"/>
    </source>
</evidence>
<evidence type="ECO:0000305" key="2"/>
<dbReference type="EC" id="4.2.1.33" evidence="1"/>
<dbReference type="EMBL" id="BX640443">
    <property type="protein sequence ID" value="CAE32626.1"/>
    <property type="status" value="ALT_INIT"/>
    <property type="molecule type" value="Genomic_DNA"/>
</dbReference>
<dbReference type="RefSeq" id="WP_033446523.1">
    <property type="nucleotide sequence ID" value="NC_002927.3"/>
</dbReference>
<dbReference type="SMR" id="Q7WKH6"/>
<dbReference type="GeneID" id="93203714"/>
<dbReference type="KEGG" id="bbr:BB2130"/>
<dbReference type="eggNOG" id="COG0065">
    <property type="taxonomic scope" value="Bacteria"/>
</dbReference>
<dbReference type="HOGENOM" id="CLU_006714_3_4_4"/>
<dbReference type="UniPathway" id="UPA00048">
    <property type="reaction ID" value="UER00071"/>
</dbReference>
<dbReference type="Proteomes" id="UP000001027">
    <property type="component" value="Chromosome"/>
</dbReference>
<dbReference type="GO" id="GO:0003861">
    <property type="term" value="F:3-isopropylmalate dehydratase activity"/>
    <property type="evidence" value="ECO:0007669"/>
    <property type="project" value="UniProtKB-UniRule"/>
</dbReference>
<dbReference type="GO" id="GO:0051539">
    <property type="term" value="F:4 iron, 4 sulfur cluster binding"/>
    <property type="evidence" value="ECO:0007669"/>
    <property type="project" value="UniProtKB-KW"/>
</dbReference>
<dbReference type="GO" id="GO:0046872">
    <property type="term" value="F:metal ion binding"/>
    <property type="evidence" value="ECO:0007669"/>
    <property type="project" value="UniProtKB-KW"/>
</dbReference>
<dbReference type="GO" id="GO:0009098">
    <property type="term" value="P:L-leucine biosynthetic process"/>
    <property type="evidence" value="ECO:0007669"/>
    <property type="project" value="UniProtKB-UniRule"/>
</dbReference>
<dbReference type="CDD" id="cd01583">
    <property type="entry name" value="IPMI"/>
    <property type="match status" value="1"/>
</dbReference>
<dbReference type="FunFam" id="3.30.499.10:FF:000007">
    <property type="entry name" value="3-isopropylmalate dehydratase large subunit"/>
    <property type="match status" value="1"/>
</dbReference>
<dbReference type="Gene3D" id="3.30.499.10">
    <property type="entry name" value="Aconitase, domain 3"/>
    <property type="match status" value="2"/>
</dbReference>
<dbReference type="HAMAP" id="MF_01026">
    <property type="entry name" value="LeuC_type1"/>
    <property type="match status" value="1"/>
</dbReference>
<dbReference type="InterPro" id="IPR004430">
    <property type="entry name" value="3-IsopropMal_deHydase_lsu"/>
</dbReference>
<dbReference type="InterPro" id="IPR015931">
    <property type="entry name" value="Acnase/IPM_dHydase_lsu_aba_1/3"/>
</dbReference>
<dbReference type="InterPro" id="IPR001030">
    <property type="entry name" value="Acoase/IPM_deHydtase_lsu_aba"/>
</dbReference>
<dbReference type="InterPro" id="IPR018136">
    <property type="entry name" value="Aconitase_4Fe-4S_BS"/>
</dbReference>
<dbReference type="InterPro" id="IPR036008">
    <property type="entry name" value="Aconitase_4Fe-4S_dom"/>
</dbReference>
<dbReference type="InterPro" id="IPR050067">
    <property type="entry name" value="IPM_dehydratase_rel_enz"/>
</dbReference>
<dbReference type="InterPro" id="IPR033941">
    <property type="entry name" value="IPMI_cat"/>
</dbReference>
<dbReference type="NCBIfam" id="TIGR00170">
    <property type="entry name" value="leuC"/>
    <property type="match status" value="1"/>
</dbReference>
<dbReference type="NCBIfam" id="NF004016">
    <property type="entry name" value="PRK05478.1"/>
    <property type="match status" value="1"/>
</dbReference>
<dbReference type="NCBIfam" id="NF009116">
    <property type="entry name" value="PRK12466.1"/>
    <property type="match status" value="1"/>
</dbReference>
<dbReference type="PANTHER" id="PTHR43822:SF9">
    <property type="entry name" value="3-ISOPROPYLMALATE DEHYDRATASE"/>
    <property type="match status" value="1"/>
</dbReference>
<dbReference type="PANTHER" id="PTHR43822">
    <property type="entry name" value="HOMOACONITASE, MITOCHONDRIAL-RELATED"/>
    <property type="match status" value="1"/>
</dbReference>
<dbReference type="Pfam" id="PF00330">
    <property type="entry name" value="Aconitase"/>
    <property type="match status" value="1"/>
</dbReference>
<dbReference type="PRINTS" id="PR00415">
    <property type="entry name" value="ACONITASE"/>
</dbReference>
<dbReference type="SUPFAM" id="SSF53732">
    <property type="entry name" value="Aconitase iron-sulfur domain"/>
    <property type="match status" value="1"/>
</dbReference>
<dbReference type="PROSITE" id="PS00450">
    <property type="entry name" value="ACONITASE_1"/>
    <property type="match status" value="1"/>
</dbReference>
<dbReference type="PROSITE" id="PS01244">
    <property type="entry name" value="ACONITASE_2"/>
    <property type="match status" value="1"/>
</dbReference>
<keyword id="KW-0004">4Fe-4S</keyword>
<keyword id="KW-0028">Amino-acid biosynthesis</keyword>
<keyword id="KW-0100">Branched-chain amino acid biosynthesis</keyword>
<keyword id="KW-0408">Iron</keyword>
<keyword id="KW-0411">Iron-sulfur</keyword>
<keyword id="KW-0432">Leucine biosynthesis</keyword>
<keyword id="KW-0456">Lyase</keyword>
<keyword id="KW-0479">Metal-binding</keyword>
<accession>Q7WKH6</accession>
<feature type="chain" id="PRO_0000076708" description="3-isopropylmalate dehydratase large subunit">
    <location>
        <begin position="1"/>
        <end position="467"/>
    </location>
</feature>
<feature type="binding site" evidence="1">
    <location>
        <position position="347"/>
    </location>
    <ligand>
        <name>[4Fe-4S] cluster</name>
        <dbReference type="ChEBI" id="CHEBI:49883"/>
    </ligand>
</feature>
<feature type="binding site" evidence="1">
    <location>
        <position position="408"/>
    </location>
    <ligand>
        <name>[4Fe-4S] cluster</name>
        <dbReference type="ChEBI" id="CHEBI:49883"/>
    </ligand>
</feature>
<feature type="binding site" evidence="1">
    <location>
        <position position="411"/>
    </location>
    <ligand>
        <name>[4Fe-4S] cluster</name>
        <dbReference type="ChEBI" id="CHEBI:49883"/>
    </ligand>
</feature>